<proteinExistence type="inferred from homology"/>
<name>DUT_YARLI</name>
<sequence>MSLKVAFLNENARAPTRGSVHAAGYDLYAAEEKTIPANGRGLVDLGLSMSIPEGTYARIAPRSGLAVKNGLSTGAGVIDYDYRGPVKVMLFNHSTEDFNVTIGDRVAQMILERIVTPEVQVVQTNDLESTERGAGGFGSTGINDEKKRKLDEAEAKE</sequence>
<accession>Q6C141</accession>
<organism>
    <name type="scientific">Yarrowia lipolytica (strain CLIB 122 / E 150)</name>
    <name type="common">Yeast</name>
    <name type="synonym">Candida lipolytica</name>
    <dbReference type="NCBI Taxonomy" id="284591"/>
    <lineage>
        <taxon>Eukaryota</taxon>
        <taxon>Fungi</taxon>
        <taxon>Dikarya</taxon>
        <taxon>Ascomycota</taxon>
        <taxon>Saccharomycotina</taxon>
        <taxon>Dipodascomycetes</taxon>
        <taxon>Dipodascales</taxon>
        <taxon>Dipodascales incertae sedis</taxon>
        <taxon>Yarrowia</taxon>
    </lineage>
</organism>
<keyword id="KW-0378">Hydrolase</keyword>
<keyword id="KW-0460">Magnesium</keyword>
<keyword id="KW-0479">Metal-binding</keyword>
<keyword id="KW-0546">Nucleotide metabolism</keyword>
<keyword id="KW-1185">Reference proteome</keyword>
<gene>
    <name type="primary">DUT1</name>
    <name type="ordered locus">YALI0F19448g</name>
</gene>
<comment type="function">
    <text evidence="1">Involved in nucleotide metabolism via production of dUMP, the immediate precursor of thymidine nucleotides, and decreases the intracellular concentration of dUTP so that uracil cannot be incorporated into DNA.</text>
</comment>
<comment type="catalytic activity">
    <reaction evidence="1">
        <text>dUTP + H2O = dUMP + diphosphate + H(+)</text>
        <dbReference type="Rhea" id="RHEA:10248"/>
        <dbReference type="ChEBI" id="CHEBI:15377"/>
        <dbReference type="ChEBI" id="CHEBI:15378"/>
        <dbReference type="ChEBI" id="CHEBI:33019"/>
        <dbReference type="ChEBI" id="CHEBI:61555"/>
        <dbReference type="ChEBI" id="CHEBI:246422"/>
        <dbReference type="EC" id="3.6.1.23"/>
    </reaction>
    <physiologicalReaction direction="left-to-right" evidence="1">
        <dbReference type="Rhea" id="RHEA:10249"/>
    </physiologicalReaction>
</comment>
<comment type="cofactor">
    <cofactor evidence="1">
        <name>Mg(2+)</name>
        <dbReference type="ChEBI" id="CHEBI:18420"/>
    </cofactor>
</comment>
<comment type="pathway">
    <text>Pyrimidine metabolism; dUMP biosynthesis; dUMP from dCTP (dUTP route): step 2/2.</text>
</comment>
<comment type="subunit">
    <text evidence="1">Homotrimer.</text>
</comment>
<comment type="similarity">
    <text evidence="3">Belongs to the dUTPase family.</text>
</comment>
<dbReference type="EC" id="3.6.1.23" evidence="1"/>
<dbReference type="EMBL" id="CR382132">
    <property type="protein sequence ID" value="CAG78430.1"/>
    <property type="molecule type" value="Genomic_DNA"/>
</dbReference>
<dbReference type="RefSeq" id="XP_505621.1">
    <property type="nucleotide sequence ID" value="XM_505621.1"/>
</dbReference>
<dbReference type="SMR" id="Q6C141"/>
<dbReference type="FunCoup" id="Q6C141">
    <property type="interactions" value="1177"/>
</dbReference>
<dbReference type="STRING" id="284591.Q6C141"/>
<dbReference type="EnsemblFungi" id="CAG78430">
    <property type="protein sequence ID" value="CAG78430"/>
    <property type="gene ID" value="YALI0_F19448g"/>
</dbReference>
<dbReference type="KEGG" id="yli:2908309"/>
<dbReference type="VEuPathDB" id="FungiDB:YALI0_F19448g"/>
<dbReference type="HOGENOM" id="CLU_068508_2_1_1"/>
<dbReference type="InParanoid" id="Q6C141"/>
<dbReference type="OMA" id="RSGMGHK"/>
<dbReference type="OrthoDB" id="6179at4891"/>
<dbReference type="UniPathway" id="UPA00610">
    <property type="reaction ID" value="UER00666"/>
</dbReference>
<dbReference type="Proteomes" id="UP000001300">
    <property type="component" value="Chromosome F"/>
</dbReference>
<dbReference type="GO" id="GO:0004170">
    <property type="term" value="F:dUTP diphosphatase activity"/>
    <property type="evidence" value="ECO:0000318"/>
    <property type="project" value="GO_Central"/>
</dbReference>
<dbReference type="GO" id="GO:0000287">
    <property type="term" value="F:magnesium ion binding"/>
    <property type="evidence" value="ECO:0000318"/>
    <property type="project" value="GO_Central"/>
</dbReference>
<dbReference type="GO" id="GO:0006226">
    <property type="term" value="P:dUMP biosynthetic process"/>
    <property type="evidence" value="ECO:0000318"/>
    <property type="project" value="GO_Central"/>
</dbReference>
<dbReference type="GO" id="GO:0046081">
    <property type="term" value="P:dUTP catabolic process"/>
    <property type="evidence" value="ECO:0000318"/>
    <property type="project" value="GO_Central"/>
</dbReference>
<dbReference type="CDD" id="cd07557">
    <property type="entry name" value="trimeric_dUTPase"/>
    <property type="match status" value="1"/>
</dbReference>
<dbReference type="FunFam" id="2.70.40.10:FF:000007">
    <property type="entry name" value="dUTP pyrophosphatase"/>
    <property type="match status" value="1"/>
</dbReference>
<dbReference type="Gene3D" id="2.70.40.10">
    <property type="match status" value="1"/>
</dbReference>
<dbReference type="InterPro" id="IPR008181">
    <property type="entry name" value="dUTPase"/>
</dbReference>
<dbReference type="InterPro" id="IPR029054">
    <property type="entry name" value="dUTPase-like"/>
</dbReference>
<dbReference type="InterPro" id="IPR036157">
    <property type="entry name" value="dUTPase-like_sf"/>
</dbReference>
<dbReference type="InterPro" id="IPR033704">
    <property type="entry name" value="dUTPase_trimeric"/>
</dbReference>
<dbReference type="NCBIfam" id="TIGR00576">
    <property type="entry name" value="dut"/>
    <property type="match status" value="1"/>
</dbReference>
<dbReference type="NCBIfam" id="NF001862">
    <property type="entry name" value="PRK00601.1"/>
    <property type="match status" value="1"/>
</dbReference>
<dbReference type="PANTHER" id="PTHR11241">
    <property type="entry name" value="DEOXYURIDINE 5'-TRIPHOSPHATE NUCLEOTIDOHYDROLASE"/>
    <property type="match status" value="1"/>
</dbReference>
<dbReference type="PANTHER" id="PTHR11241:SF0">
    <property type="entry name" value="DEOXYURIDINE 5'-TRIPHOSPHATE NUCLEOTIDOHYDROLASE"/>
    <property type="match status" value="1"/>
</dbReference>
<dbReference type="Pfam" id="PF00692">
    <property type="entry name" value="dUTPase"/>
    <property type="match status" value="1"/>
</dbReference>
<dbReference type="SUPFAM" id="SSF51283">
    <property type="entry name" value="dUTPase-like"/>
    <property type="match status" value="1"/>
</dbReference>
<evidence type="ECO:0000250" key="1">
    <source>
        <dbReference type="UniProtKB" id="P33317"/>
    </source>
</evidence>
<evidence type="ECO:0000256" key="2">
    <source>
        <dbReference type="SAM" id="MobiDB-lite"/>
    </source>
</evidence>
<evidence type="ECO:0000305" key="3"/>
<reference key="1">
    <citation type="journal article" date="2004" name="Nature">
        <title>Genome evolution in yeasts.</title>
        <authorList>
            <person name="Dujon B."/>
            <person name="Sherman D."/>
            <person name="Fischer G."/>
            <person name="Durrens P."/>
            <person name="Casaregola S."/>
            <person name="Lafontaine I."/>
            <person name="de Montigny J."/>
            <person name="Marck C."/>
            <person name="Neuveglise C."/>
            <person name="Talla E."/>
            <person name="Goffard N."/>
            <person name="Frangeul L."/>
            <person name="Aigle M."/>
            <person name="Anthouard V."/>
            <person name="Babour A."/>
            <person name="Barbe V."/>
            <person name="Barnay S."/>
            <person name="Blanchin S."/>
            <person name="Beckerich J.-M."/>
            <person name="Beyne E."/>
            <person name="Bleykasten C."/>
            <person name="Boisrame A."/>
            <person name="Boyer J."/>
            <person name="Cattolico L."/>
            <person name="Confanioleri F."/>
            <person name="de Daruvar A."/>
            <person name="Despons L."/>
            <person name="Fabre E."/>
            <person name="Fairhead C."/>
            <person name="Ferry-Dumazet H."/>
            <person name="Groppi A."/>
            <person name="Hantraye F."/>
            <person name="Hennequin C."/>
            <person name="Jauniaux N."/>
            <person name="Joyet P."/>
            <person name="Kachouri R."/>
            <person name="Kerrest A."/>
            <person name="Koszul R."/>
            <person name="Lemaire M."/>
            <person name="Lesur I."/>
            <person name="Ma L."/>
            <person name="Muller H."/>
            <person name="Nicaud J.-M."/>
            <person name="Nikolski M."/>
            <person name="Oztas S."/>
            <person name="Ozier-Kalogeropoulos O."/>
            <person name="Pellenz S."/>
            <person name="Potier S."/>
            <person name="Richard G.-F."/>
            <person name="Straub M.-L."/>
            <person name="Suleau A."/>
            <person name="Swennen D."/>
            <person name="Tekaia F."/>
            <person name="Wesolowski-Louvel M."/>
            <person name="Westhof E."/>
            <person name="Wirth B."/>
            <person name="Zeniou-Meyer M."/>
            <person name="Zivanovic Y."/>
            <person name="Bolotin-Fukuhara M."/>
            <person name="Thierry A."/>
            <person name="Bouchier C."/>
            <person name="Caudron B."/>
            <person name="Scarpelli C."/>
            <person name="Gaillardin C."/>
            <person name="Weissenbach J."/>
            <person name="Wincker P."/>
            <person name="Souciet J.-L."/>
        </authorList>
    </citation>
    <scope>NUCLEOTIDE SEQUENCE [LARGE SCALE GENOMIC DNA]</scope>
    <source>
        <strain>CLIB 122 / E 150</strain>
    </source>
</reference>
<protein>
    <recommendedName>
        <fullName evidence="1">Deoxyuridine 5'-triphosphate nucleotidohydrolase</fullName>
        <shortName evidence="1">dUTPase</shortName>
        <ecNumber evidence="1">3.6.1.23</ecNumber>
    </recommendedName>
    <alternativeName>
        <fullName evidence="1">dUTP pyrophosphatase</fullName>
    </alternativeName>
</protein>
<feature type="chain" id="PRO_0000182936" description="Deoxyuridine 5'-triphosphate nucleotidohydrolase">
    <location>
        <begin position="1"/>
        <end position="157"/>
    </location>
</feature>
<feature type="region of interest" description="Disordered" evidence="2">
    <location>
        <begin position="125"/>
        <end position="157"/>
    </location>
</feature>
<feature type="compositionally biased region" description="Basic and acidic residues" evidence="2">
    <location>
        <begin position="143"/>
        <end position="157"/>
    </location>
</feature>
<feature type="binding site" evidence="1">
    <location>
        <position position="63"/>
    </location>
    <ligand>
        <name>dUMP</name>
        <dbReference type="ChEBI" id="CHEBI:246422"/>
    </ligand>
</feature>
<feature type="binding site" evidence="1">
    <location>
        <position position="76"/>
    </location>
    <ligand>
        <name>dUMP</name>
        <dbReference type="ChEBI" id="CHEBI:246422"/>
    </ligand>
</feature>
<feature type="binding site" evidence="1">
    <location>
        <position position="79"/>
    </location>
    <ligand>
        <name>dUMP</name>
        <dbReference type="ChEBI" id="CHEBI:246422"/>
    </ligand>
</feature>
<feature type="binding site" evidence="1">
    <location>
        <position position="82"/>
    </location>
    <ligand>
        <name>dUMP</name>
        <dbReference type="ChEBI" id="CHEBI:246422"/>
    </ligand>
</feature>
<feature type="binding site" evidence="1">
    <location>
        <position position="87"/>
    </location>
    <ligand>
        <name>dUMP</name>
        <dbReference type="ChEBI" id="CHEBI:246422"/>
    </ligand>
</feature>
<feature type="binding site" evidence="1">
    <location>
        <position position="132"/>
    </location>
    <ligand>
        <name>dUMP</name>
        <dbReference type="ChEBI" id="CHEBI:246422"/>
    </ligand>
</feature>
<feature type="binding site" evidence="1">
    <location>
        <position position="137"/>
    </location>
    <ligand>
        <name>dUMP</name>
        <dbReference type="ChEBI" id="CHEBI:246422"/>
    </ligand>
</feature>
<feature type="binding site" evidence="1">
    <location>
        <position position="138"/>
    </location>
    <ligand>
        <name>dUMP</name>
        <dbReference type="ChEBI" id="CHEBI:246422"/>
    </ligand>
</feature>